<reference key="1">
    <citation type="journal article" date="1995" name="Virology">
        <title>Analysis of the complete nucleotide sequence of African swine fever virus.</title>
        <authorList>
            <person name="Yanez R.J."/>
            <person name="Rodriguez J.M."/>
            <person name="Nogal M.L."/>
            <person name="Yuste L."/>
            <person name="Enriquez C."/>
            <person name="Rodriguez J.F."/>
            <person name="Vinuela E."/>
        </authorList>
    </citation>
    <scope>NUCLEOTIDE SEQUENCE [LARGE SCALE GENOMIC DNA]</scope>
</reference>
<reference key="2">
    <citation type="journal article" date="2020" name="J. Virol.">
        <title>The African Swine Fever Virus Transcriptome.</title>
        <authorList>
            <person name="Cackett G."/>
            <person name="Matelska D."/>
            <person name="Sykora M."/>
            <person name="Portugal R."/>
            <person name="Malecki M."/>
            <person name="Baehler J."/>
            <person name="Dixon L."/>
            <person name="Werner F."/>
        </authorList>
    </citation>
    <scope>INDUCTION</scope>
</reference>
<organismHost>
    <name type="scientific">Ornithodoros</name>
    <name type="common">relapsing fever ticks</name>
    <dbReference type="NCBI Taxonomy" id="6937"/>
</organismHost>
<organismHost>
    <name type="scientific">Sus scrofa</name>
    <name type="common">Pig</name>
    <dbReference type="NCBI Taxonomy" id="9823"/>
</organismHost>
<proteinExistence type="evidence at transcript level"/>
<keyword id="KW-0426">Late protein</keyword>
<keyword id="KW-1185">Reference proteome</keyword>
<keyword id="KW-0677">Repeat</keyword>
<sequence>MEDTTFLEGANLAGITTLMNNLHINEQANLEELEKQVMGKQQSFPTDHFDEELNGLAKSLGINFNDPEFSLDSPHSVISKKPSGRGRDKVHGGIRRDSVCTDSICSDSVCSGSIRSGSIRSGSIRNGSIRSGSVRDDSVRSGKTRRGLACNSSSRNDRGYSLSTHRKKYAESEASQKTAFSKRDRKNHYAESEYSEKSIKPSTKQVDRLINHLRSNGDPNSFYKKDHDYERKTKLVKLEKINMLLTYLGNEQISTDDIKIPTIDSSMQEIDDVIEMLTLRNVGIRYSSIAEEILIGLARGLEIVFDGTREIPFLNYRPDYTGLHNTFMIKLFKMRYETSQVVGNLVQNMSPLSKICLELGPSLLLYPALIRTKHKASEDLYNLLQKGPEDPFTAYNEIHETLKKNNK</sequence>
<evidence type="ECO:0000256" key="1">
    <source>
        <dbReference type="SAM" id="MobiDB-lite"/>
    </source>
</evidence>
<evidence type="ECO:0000269" key="2">
    <source>
    </source>
</evidence>
<evidence type="ECO:0000305" key="3"/>
<protein>
    <recommendedName>
        <fullName>Uncharacterized protein B407L</fullName>
        <shortName>pB407L</shortName>
    </recommendedName>
</protein>
<feature type="chain" id="PRO_0000373676" description="Uncharacterized protein B407L">
    <location>
        <begin position="1"/>
        <end position="407"/>
    </location>
</feature>
<feature type="repeat" description="1">
    <location>
        <begin position="112"/>
        <end position="116"/>
    </location>
</feature>
<feature type="repeat" description="2">
    <location>
        <begin position="117"/>
        <end position="121"/>
    </location>
</feature>
<feature type="repeat" description="3">
    <location>
        <begin position="122"/>
        <end position="126"/>
    </location>
</feature>
<feature type="repeat" description="4">
    <location>
        <begin position="127"/>
        <end position="131"/>
    </location>
</feature>
<feature type="repeat" description="5">
    <location>
        <begin position="132"/>
        <end position="136"/>
    </location>
</feature>
<feature type="region of interest" description="Disordered" evidence="1">
    <location>
        <begin position="73"/>
        <end position="93"/>
    </location>
</feature>
<feature type="region of interest" description="5 X 5 AA tandem repeats of G-[S]-[IV]-R-[DNS]">
    <location>
        <begin position="112"/>
        <end position="136"/>
    </location>
</feature>
<feature type="region of interest" description="Disordered" evidence="1">
    <location>
        <begin position="116"/>
        <end position="202"/>
    </location>
</feature>
<feature type="compositionally biased region" description="Low complexity" evidence="1">
    <location>
        <begin position="116"/>
        <end position="132"/>
    </location>
</feature>
<feature type="compositionally biased region" description="Basic and acidic residues" evidence="1">
    <location>
        <begin position="187"/>
        <end position="202"/>
    </location>
</feature>
<dbReference type="EMBL" id="U18466">
    <property type="protein sequence ID" value="AAA65314.1"/>
    <property type="molecule type" value="Genomic_DNA"/>
</dbReference>
<dbReference type="RefSeq" id="NP_042778.1">
    <property type="nucleotide sequence ID" value="NC_001659.2"/>
</dbReference>
<dbReference type="GeneID" id="22220314"/>
<dbReference type="KEGG" id="vg:22220314"/>
<dbReference type="Proteomes" id="UP000000624">
    <property type="component" value="Segment"/>
</dbReference>
<organism>
    <name type="scientific">African swine fever virus (strain Badajoz 1971 Vero-adapted)</name>
    <name type="common">Ba71V</name>
    <name type="synonym">ASFV</name>
    <dbReference type="NCBI Taxonomy" id="10498"/>
    <lineage>
        <taxon>Viruses</taxon>
        <taxon>Varidnaviria</taxon>
        <taxon>Bamfordvirae</taxon>
        <taxon>Nucleocytoviricota</taxon>
        <taxon>Pokkesviricetes</taxon>
        <taxon>Asfuvirales</taxon>
        <taxon>Asfarviridae</taxon>
        <taxon>Asfivirus</taxon>
        <taxon>African swine fever virus</taxon>
    </lineage>
</organism>
<accession>Q65173</accession>
<comment type="induction">
    <text evidence="2">Expressed in the late phase of the viral replicative cycle.</text>
</comment>
<comment type="similarity">
    <text evidence="3">Belongs to the asfivirus B407L family.</text>
</comment>
<name>VF407_ASFB7</name>
<gene>
    <name type="ordered locus">Ba71V-084</name>
    <name type="ORF">B407L</name>
</gene>